<gene>
    <name evidence="1" type="primary">rpoZ</name>
    <name type="ordered locus">Ccur92_05820</name>
    <name type="ORF">CCV52592_0482</name>
</gene>
<sequence>MRTEQITAKALKQIGDDRYKLSLIVAKRAEALANGAQALIEGDTSKMKFADIALMEVAEGKIGLEAIVEGK</sequence>
<proteinExistence type="inferred from homology"/>
<name>RPOZ_CAMC5</name>
<accession>A7GXE4</accession>
<keyword id="KW-0240">DNA-directed RNA polymerase</keyword>
<keyword id="KW-0548">Nucleotidyltransferase</keyword>
<keyword id="KW-1185">Reference proteome</keyword>
<keyword id="KW-0804">Transcription</keyword>
<keyword id="KW-0808">Transferase</keyword>
<dbReference type="EC" id="2.7.7.6" evidence="1"/>
<dbReference type="EMBL" id="CP000767">
    <property type="protein sequence ID" value="EAU00775.1"/>
    <property type="molecule type" value="Genomic_DNA"/>
</dbReference>
<dbReference type="RefSeq" id="WP_011992047.1">
    <property type="nucleotide sequence ID" value="NC_009715.2"/>
</dbReference>
<dbReference type="SMR" id="A7GXE4"/>
<dbReference type="STRING" id="360105.CCV52592_0482"/>
<dbReference type="KEGG" id="ccv:CCV52592_0482"/>
<dbReference type="HOGENOM" id="CLU_125406_3_0_7"/>
<dbReference type="OrthoDB" id="5334728at2"/>
<dbReference type="Proteomes" id="UP000006380">
    <property type="component" value="Chromosome"/>
</dbReference>
<dbReference type="GO" id="GO:0000428">
    <property type="term" value="C:DNA-directed RNA polymerase complex"/>
    <property type="evidence" value="ECO:0007669"/>
    <property type="project" value="UniProtKB-KW"/>
</dbReference>
<dbReference type="GO" id="GO:0003677">
    <property type="term" value="F:DNA binding"/>
    <property type="evidence" value="ECO:0007669"/>
    <property type="project" value="UniProtKB-UniRule"/>
</dbReference>
<dbReference type="GO" id="GO:0003899">
    <property type="term" value="F:DNA-directed RNA polymerase activity"/>
    <property type="evidence" value="ECO:0007669"/>
    <property type="project" value="UniProtKB-UniRule"/>
</dbReference>
<dbReference type="GO" id="GO:0006351">
    <property type="term" value="P:DNA-templated transcription"/>
    <property type="evidence" value="ECO:0007669"/>
    <property type="project" value="UniProtKB-UniRule"/>
</dbReference>
<dbReference type="Gene3D" id="3.90.940.10">
    <property type="match status" value="1"/>
</dbReference>
<dbReference type="HAMAP" id="MF_00366">
    <property type="entry name" value="RNApol_bact_RpoZ"/>
    <property type="match status" value="1"/>
</dbReference>
<dbReference type="InterPro" id="IPR003716">
    <property type="entry name" value="DNA-dir_RNA_pol_omega"/>
</dbReference>
<dbReference type="InterPro" id="IPR006110">
    <property type="entry name" value="Pol_omega/Rpo6/RPB6"/>
</dbReference>
<dbReference type="InterPro" id="IPR036161">
    <property type="entry name" value="RPB6/omega-like_sf"/>
</dbReference>
<dbReference type="NCBIfam" id="NF001579">
    <property type="entry name" value="PRK00392.6-2"/>
    <property type="match status" value="1"/>
</dbReference>
<dbReference type="Pfam" id="PF01192">
    <property type="entry name" value="RNA_pol_Rpb6"/>
    <property type="match status" value="1"/>
</dbReference>
<dbReference type="SMART" id="SM01409">
    <property type="entry name" value="RNA_pol_Rpb6"/>
    <property type="match status" value="1"/>
</dbReference>
<dbReference type="SUPFAM" id="SSF63562">
    <property type="entry name" value="RPB6/omega subunit-like"/>
    <property type="match status" value="1"/>
</dbReference>
<comment type="function">
    <text evidence="1">Promotes RNA polymerase assembly. Latches the N- and C-terminal regions of the beta' subunit thereby facilitating its interaction with the beta and alpha subunits.</text>
</comment>
<comment type="catalytic activity">
    <reaction evidence="1">
        <text>RNA(n) + a ribonucleoside 5'-triphosphate = RNA(n+1) + diphosphate</text>
        <dbReference type="Rhea" id="RHEA:21248"/>
        <dbReference type="Rhea" id="RHEA-COMP:14527"/>
        <dbReference type="Rhea" id="RHEA-COMP:17342"/>
        <dbReference type="ChEBI" id="CHEBI:33019"/>
        <dbReference type="ChEBI" id="CHEBI:61557"/>
        <dbReference type="ChEBI" id="CHEBI:140395"/>
        <dbReference type="EC" id="2.7.7.6"/>
    </reaction>
</comment>
<comment type="subunit">
    <text evidence="1">The RNAP catalytic core consists of 2 alpha, 1 beta, 1 beta' and 1 omega subunit. When a sigma factor is associated with the core the holoenzyme is formed, which can initiate transcription.</text>
</comment>
<comment type="similarity">
    <text evidence="1">Belongs to the RNA polymerase subunit omega family.</text>
</comment>
<evidence type="ECO:0000255" key="1">
    <source>
        <dbReference type="HAMAP-Rule" id="MF_00366"/>
    </source>
</evidence>
<protein>
    <recommendedName>
        <fullName evidence="1">DNA-directed RNA polymerase subunit omega</fullName>
        <shortName evidence="1">RNAP omega subunit</shortName>
        <ecNumber evidence="1">2.7.7.6</ecNumber>
    </recommendedName>
    <alternativeName>
        <fullName evidence="1">RNA polymerase omega subunit</fullName>
    </alternativeName>
    <alternativeName>
        <fullName evidence="1">Transcriptase subunit omega</fullName>
    </alternativeName>
</protein>
<feature type="chain" id="PRO_1000079619" description="DNA-directed RNA polymerase subunit omega">
    <location>
        <begin position="1"/>
        <end position="71"/>
    </location>
</feature>
<organism>
    <name type="scientific">Campylobacter curvus (strain 525.92)</name>
    <dbReference type="NCBI Taxonomy" id="360105"/>
    <lineage>
        <taxon>Bacteria</taxon>
        <taxon>Pseudomonadati</taxon>
        <taxon>Campylobacterota</taxon>
        <taxon>Epsilonproteobacteria</taxon>
        <taxon>Campylobacterales</taxon>
        <taxon>Campylobacteraceae</taxon>
        <taxon>Campylobacter</taxon>
    </lineage>
</organism>
<reference key="1">
    <citation type="submission" date="2007-07" db="EMBL/GenBank/DDBJ databases">
        <title>Genome sequence of Campylobacter curvus 525.92 isolated from human feces.</title>
        <authorList>
            <person name="Fouts D.E."/>
            <person name="Mongodin E.F."/>
            <person name="Puiu D."/>
            <person name="Sebastian Y."/>
            <person name="Miller W.G."/>
            <person name="Mandrell R.E."/>
            <person name="Lastovica A.J."/>
            <person name="Nelson K.E."/>
        </authorList>
    </citation>
    <scope>NUCLEOTIDE SEQUENCE [LARGE SCALE GENOMIC DNA]</scope>
    <source>
        <strain>525.92</strain>
    </source>
</reference>